<protein>
    <recommendedName>
        <fullName>Probable outer membrane protein PmpB</fullName>
    </recommendedName>
    <alternativeName>
        <fullName>Polymorphic membrane protein B</fullName>
    </alternativeName>
</protein>
<sequence length="1672" mass="176297">MSSMKWLSATAVFAAVLPSVSGFCFPESKELNFSRTGTSSSTTFTETIGENGTEYIVSGNSSFTNFTNIPVKKPTTDDSSTSTPTTSSAVDPTEKIVRASSSSSPNSGDTSATPDPKGGGAFYNEHSGILSFMARSGVEGSLTLSNIKMTGDGGAIYSQGELLFTDLTGLTIQGNLSQLSGGGIFGGSTISFSGINQATFSSNTAEVVPEETTPNPNPGTQTTTSQPSPTSKVQSLFTYSSSTQANGNGADSQTPSHKPGSGGAIYATGDLTISDSQEIVFSVNKASKDGGAIFAEKNVSFENITTLKVQNNGAEEKGGGIYASGDLSIQSSKQSLFNSNTSKQGGGALYIEGNVDFKDLEEIRIKYNKSGTFETKKVTLSLPEAQTNKSSVTAASQSGPNTTPTPTPPVTAKGGGLYTEKNLSISNITGIIEITNNKATDVGGGAYVKGTLTCKDSHRLQFQKNSSEKKGGGLYTEDTITLSNLTGKTLFQENTAKEEGGGLYIQGDDKTLTMTGLDSFCLIDNTSATHGGGAYVTKEISQTYTSDVEEFPGITPVHGETIISGNKATGGSGGGVCTKHLVLSNLQTISISENFASENGGGACTCPDNFPAPTASTPSTNQTAAPKDDKDFLIDYVVSTTIDKNKATKKGAGVYAKKAKLSRIDELNISDNAAQETGGGFCCTESLELDTIASLSVTKNLAGKEGGGLHAKTLNISNLKSGLSFSNNTANSSSTGVATTATTSQSPTVSSFLPRATAGSSPAPAQTTPTYAGVVGGAIYGETVSFSKCSGLCQFTENSAIDNTPSSPSLNVQGGAIYAKTSLSIEAEDPSTSYVFSKNSVSTGKAQTTGQIAGGAIYSPSVTLNCQTVFSGNSASMATTNPPSGTSPKDTIGGAIAGTTISLSKTSHFSENTADLGAAIGTLSGGSSSNLTEKITLSNGSFTFEKNKANKRGVIYAPSVSIKGNNITFNQNTSTHDGSAIYFTKDATIESLGSVLFTGNNVTAEQASSTATGGQTTNTTNYGAAIFGDPGTQTTDTTLKLIASSGNITFSNNSQNTATNNPATKFCSISGYVKLTLQAAQGKTISFFDSIRTSTKKTGQAQNSYETLDINKTENSNTYAGTVLFSSELHEVKSYVPQNVVLHNGTLVLKKNAELHVVSFEQKEGSKLIMEPGAVLSNQNIANGALAINGLTIDLSSLGAPQTGEVFSPPELRIVATTSNSGGGGGVGGYVTASKNLSAASPTVAATNPTMADNKVFLTGALTLIDPDGNFYQNPILGTDLTDVPLIKLPTTANQVDVSNLTLSGDLSPKKGYTGTWTLNPDPQTGKVVANWKFDMYRRWEYIPRDNHFYANSILGSQNSMIVVKQGLINNMLHNARFDDAAYNNFWVSGVGTFLSQQGTPLSEEFSYYSRGTSVAIDAKPRPDFILGAAFSKMVGRTKAIKKVHNYSHKGSEYSYQASVYGGKFLYFLLNKQHGWALPFLLQGVVSYGHIKHDTTTLYPSIHEKNKGDWEDLGWLVDLRVSMDVKEPSKRSSKRVALYGELEYSSIRQKSFTEIDYDPRRFDDCAYRNLSIPMGCYFEGAIMSYDILMYNKLSLAYMPSIYRNNPVCKYWVLSSNETSKVVCGVPTRTSARAEYSTQLYLGPFWTLYGNYTIDVGMYTLAQMTSCGARMIF</sequence>
<evidence type="ECO:0000255" key="1"/>
<evidence type="ECO:0000255" key="2">
    <source>
        <dbReference type="PROSITE-ProRule" id="PRU00556"/>
    </source>
</evidence>
<evidence type="ECO:0000256" key="3">
    <source>
        <dbReference type="SAM" id="MobiDB-lite"/>
    </source>
</evidence>
<evidence type="ECO:0000305" key="4"/>
<reference key="1">
    <citation type="journal article" date="2000" name="Nucleic Acids Res.">
        <title>Genome sequences of Chlamydia trachomatis MoPn and Chlamydia pneumoniae AR39.</title>
        <authorList>
            <person name="Read T.D."/>
            <person name="Brunham R.C."/>
            <person name="Shen C."/>
            <person name="Gill S.R."/>
            <person name="Heidelberg J.F."/>
            <person name="White O."/>
            <person name="Hickey E.K."/>
            <person name="Peterson J.D."/>
            <person name="Utterback T.R."/>
            <person name="Berry K.J."/>
            <person name="Bass S."/>
            <person name="Linher K.D."/>
            <person name="Weidman J.F."/>
            <person name="Khouri H.M."/>
            <person name="Craven B."/>
            <person name="Bowman C."/>
            <person name="Dodson R.J."/>
            <person name="Gwinn M.L."/>
            <person name="Nelson W.C."/>
            <person name="DeBoy R.T."/>
            <person name="Kolonay J.F."/>
            <person name="McClarty G."/>
            <person name="Salzberg S.L."/>
            <person name="Eisen J.A."/>
            <person name="Fraser C.M."/>
        </authorList>
    </citation>
    <scope>NUCLEOTIDE SEQUENCE [LARGE SCALE GENOMIC DNA]</scope>
    <source>
        <strain>MoPn / Nigg</strain>
    </source>
</reference>
<comment type="subcellular location">
    <subcellularLocation>
        <location>Secreted</location>
        <location>Cell wall</location>
    </subcellularLocation>
    <subcellularLocation>
        <location evidence="4">Cell outer membrane</location>
        <topology evidence="4">Peripheral membrane protein</topology>
        <orientation evidence="4">Extracellular side</orientation>
    </subcellularLocation>
</comment>
<comment type="developmental stage">
    <text>Elementary body.</text>
</comment>
<comment type="similarity">
    <text evidence="4">Belongs to the PMP outer membrane protein family.</text>
</comment>
<dbReference type="EMBL" id="AE002160">
    <property type="protein sequence ID" value="AAF39510.1"/>
    <property type="molecule type" value="Genomic_DNA"/>
</dbReference>
<dbReference type="PIR" id="C81675">
    <property type="entry name" value="C81675"/>
</dbReference>
<dbReference type="KEGG" id="cmu:TC_0694"/>
<dbReference type="eggNOG" id="COG3210">
    <property type="taxonomic scope" value="Bacteria"/>
</dbReference>
<dbReference type="HOGENOM" id="CLU_001452_0_0_0"/>
<dbReference type="Proteomes" id="UP000000800">
    <property type="component" value="Chromosome"/>
</dbReference>
<dbReference type="GO" id="GO:0009279">
    <property type="term" value="C:cell outer membrane"/>
    <property type="evidence" value="ECO:0007669"/>
    <property type="project" value="UniProtKB-SubCell"/>
</dbReference>
<dbReference type="GO" id="GO:0005576">
    <property type="term" value="C:extracellular region"/>
    <property type="evidence" value="ECO:0007669"/>
    <property type="project" value="UniProtKB-KW"/>
</dbReference>
<dbReference type="GO" id="GO:0043130">
    <property type="term" value="F:ubiquitin binding"/>
    <property type="evidence" value="ECO:0007669"/>
    <property type="project" value="TreeGrafter"/>
</dbReference>
<dbReference type="GO" id="GO:0000724">
    <property type="term" value="P:double-strand break repair via homologous recombination"/>
    <property type="evidence" value="ECO:0007669"/>
    <property type="project" value="TreeGrafter"/>
</dbReference>
<dbReference type="Gene3D" id="2.40.128.130">
    <property type="entry name" value="Autotransporter beta-domain"/>
    <property type="match status" value="1"/>
</dbReference>
<dbReference type="InterPro" id="IPR005546">
    <property type="entry name" value="Autotransporte_beta"/>
</dbReference>
<dbReference type="InterPro" id="IPR036709">
    <property type="entry name" value="Autotransporte_beta_dom_sf"/>
</dbReference>
<dbReference type="InterPro" id="IPR006626">
    <property type="entry name" value="PbH1"/>
</dbReference>
<dbReference type="InterPro" id="IPR011427">
    <property type="entry name" value="Polymorphic_membr_middle"/>
</dbReference>
<dbReference type="InterPro" id="IPR003368">
    <property type="entry name" value="POMP_repeat"/>
</dbReference>
<dbReference type="InterPro" id="IPR051246">
    <property type="entry name" value="WDR48"/>
</dbReference>
<dbReference type="NCBIfam" id="TIGR01376">
    <property type="entry name" value="POMP_repeat"/>
    <property type="match status" value="4"/>
</dbReference>
<dbReference type="PANTHER" id="PTHR19862">
    <property type="entry name" value="WD REPEAT-CONTAINING PROTEIN 48"/>
    <property type="match status" value="1"/>
</dbReference>
<dbReference type="PANTHER" id="PTHR19862:SF14">
    <property type="entry name" value="WD REPEAT-CONTAINING PROTEIN 48"/>
    <property type="match status" value="1"/>
</dbReference>
<dbReference type="Pfam" id="PF03797">
    <property type="entry name" value="Autotransporter"/>
    <property type="match status" value="1"/>
</dbReference>
<dbReference type="Pfam" id="PF02415">
    <property type="entry name" value="Chlam_PMP"/>
    <property type="match status" value="2"/>
</dbReference>
<dbReference type="Pfam" id="PF07548">
    <property type="entry name" value="ChlamPMP_M"/>
    <property type="match status" value="1"/>
</dbReference>
<dbReference type="SMART" id="SM00869">
    <property type="entry name" value="Autotransporter"/>
    <property type="match status" value="1"/>
</dbReference>
<dbReference type="SMART" id="SM00710">
    <property type="entry name" value="PbH1"/>
    <property type="match status" value="10"/>
</dbReference>
<dbReference type="SUPFAM" id="SSF103515">
    <property type="entry name" value="Autotransporter"/>
    <property type="match status" value="1"/>
</dbReference>
<dbReference type="PROSITE" id="PS51208">
    <property type="entry name" value="AUTOTRANSPORTER"/>
    <property type="match status" value="1"/>
</dbReference>
<accession>Q9PJY2</accession>
<organism>
    <name type="scientific">Chlamydia muridarum (strain MoPn / Nigg)</name>
    <dbReference type="NCBI Taxonomy" id="243161"/>
    <lineage>
        <taxon>Bacteria</taxon>
        <taxon>Pseudomonadati</taxon>
        <taxon>Chlamydiota</taxon>
        <taxon>Chlamydiia</taxon>
        <taxon>Chlamydiales</taxon>
        <taxon>Chlamydiaceae</taxon>
        <taxon>Chlamydia/Chlamydophila group</taxon>
        <taxon>Chlamydia</taxon>
    </lineage>
</organism>
<proteinExistence type="evidence at transcript level"/>
<name>PMPB_CHLMU</name>
<feature type="signal peptide" evidence="1">
    <location>
        <begin position="1"/>
        <end position="14"/>
    </location>
</feature>
<feature type="chain" id="PRO_0000024718" description="Probable outer membrane protein PmpB">
    <location>
        <begin position="15"/>
        <end position="1672"/>
    </location>
</feature>
<feature type="domain" description="Autotransporter" evidence="2">
    <location>
        <begin position="1379"/>
        <end position="1672"/>
    </location>
</feature>
<feature type="region of interest" description="Disordered" evidence="3">
    <location>
        <begin position="69"/>
        <end position="122"/>
    </location>
</feature>
<feature type="region of interest" description="Disordered" evidence="3">
    <location>
        <begin position="203"/>
        <end position="263"/>
    </location>
</feature>
<feature type="region of interest" description="Disordered" evidence="3">
    <location>
        <begin position="384"/>
        <end position="415"/>
    </location>
</feature>
<feature type="region of interest" description="Disordered" evidence="3">
    <location>
        <begin position="734"/>
        <end position="765"/>
    </location>
</feature>
<feature type="compositionally biased region" description="Low complexity" evidence="3">
    <location>
        <begin position="77"/>
        <end position="88"/>
    </location>
</feature>
<feature type="compositionally biased region" description="Low complexity" evidence="3">
    <location>
        <begin position="100"/>
        <end position="111"/>
    </location>
</feature>
<feature type="compositionally biased region" description="Low complexity" evidence="3">
    <location>
        <begin position="203"/>
        <end position="234"/>
    </location>
</feature>
<feature type="compositionally biased region" description="Polar residues" evidence="3">
    <location>
        <begin position="235"/>
        <end position="256"/>
    </location>
</feature>
<feature type="compositionally biased region" description="Polar residues" evidence="3">
    <location>
        <begin position="384"/>
        <end position="399"/>
    </location>
</feature>
<feature type="compositionally biased region" description="Low complexity" evidence="3">
    <location>
        <begin position="734"/>
        <end position="744"/>
    </location>
</feature>
<gene>
    <name type="primary">pmpB</name>
    <name type="ordered locus">TC_0694</name>
</gene>
<keyword id="KW-0998">Cell outer membrane</keyword>
<keyword id="KW-0134">Cell wall</keyword>
<keyword id="KW-0472">Membrane</keyword>
<keyword id="KW-0964">Secreted</keyword>
<keyword id="KW-0732">Signal</keyword>
<keyword id="KW-0812">Transmembrane</keyword>
<keyword id="KW-1134">Transmembrane beta strand</keyword>